<organism>
    <name type="scientific">Caldicellulosiruptor saccharolyticus (strain ATCC 43494 / DSM 8903 / Tp8T 6331)</name>
    <dbReference type="NCBI Taxonomy" id="351627"/>
    <lineage>
        <taxon>Bacteria</taxon>
        <taxon>Bacillati</taxon>
        <taxon>Bacillota</taxon>
        <taxon>Bacillota incertae sedis</taxon>
        <taxon>Caldicellulosiruptorales</taxon>
        <taxon>Caldicellulosiruptoraceae</taxon>
        <taxon>Caldicellulosiruptor</taxon>
    </lineage>
</organism>
<accession>A4XJV0</accession>
<protein>
    <recommendedName>
        <fullName evidence="1">Nucleoid-associated protein Csac_1593</fullName>
    </recommendedName>
</protein>
<reference key="1">
    <citation type="submission" date="2007-04" db="EMBL/GenBank/DDBJ databases">
        <title>Genome sequence of the thermophilic hydrogen-producing bacterium Caldicellulosiruptor saccharolyticus DSM 8903.</title>
        <authorList>
            <person name="Copeland A."/>
            <person name="Lucas S."/>
            <person name="Lapidus A."/>
            <person name="Barry K."/>
            <person name="Detter J.C."/>
            <person name="Glavina del Rio T."/>
            <person name="Hammon N."/>
            <person name="Israni S."/>
            <person name="Dalin E."/>
            <person name="Tice H."/>
            <person name="Pitluck S."/>
            <person name="Kiss H."/>
            <person name="Brettin T."/>
            <person name="Bruce D."/>
            <person name="Han C."/>
            <person name="Schmutz J."/>
            <person name="Larimer F."/>
            <person name="Land M."/>
            <person name="Hauser L."/>
            <person name="Kyrpides N."/>
            <person name="Lykidis A."/>
            <person name="van de Werken H.J.G."/>
            <person name="Verhaart M.R.A."/>
            <person name="VanFossen A.L."/>
            <person name="Lewis D.L."/>
            <person name="Nichols J.D."/>
            <person name="Goorissen H.P."/>
            <person name="van Niel E.W.J."/>
            <person name="Stams F.J.M."/>
            <person name="Willquist K.U."/>
            <person name="Ward D.E."/>
            <person name="van der Oost J."/>
            <person name="Kelly R.M."/>
            <person name="Kengen S.M.W."/>
            <person name="Richardson P."/>
        </authorList>
    </citation>
    <scope>NUCLEOTIDE SEQUENCE [LARGE SCALE GENOMIC DNA]</scope>
    <source>
        <strain>ATCC 43494 / DSM 8903 / Tp8T 6331</strain>
    </source>
</reference>
<keyword id="KW-0963">Cytoplasm</keyword>
<keyword id="KW-0238">DNA-binding</keyword>
<proteinExistence type="inferred from homology"/>
<feature type="chain" id="PRO_1000003714" description="Nucleoid-associated protein Csac_1593">
    <location>
        <begin position="1"/>
        <end position="113"/>
    </location>
</feature>
<evidence type="ECO:0000255" key="1">
    <source>
        <dbReference type="HAMAP-Rule" id="MF_00274"/>
    </source>
</evidence>
<gene>
    <name type="ordered locus">Csac_1593</name>
</gene>
<sequence>MAKNRFPGLGGGFNINQLQKQAKKIQEEIEKLQEELNQREIEATAGGGAVKVVINGKKEIKSIEISPEVVDPDDIETLQDLIVACVNEAIRKVEKMIEEEMQKVAGFGFTGLF</sequence>
<dbReference type="EMBL" id="CP000679">
    <property type="protein sequence ID" value="ABP67185.1"/>
    <property type="molecule type" value="Genomic_DNA"/>
</dbReference>
<dbReference type="RefSeq" id="WP_011917121.1">
    <property type="nucleotide sequence ID" value="NC_009437.1"/>
</dbReference>
<dbReference type="SMR" id="A4XJV0"/>
<dbReference type="STRING" id="351627.Csac_1593"/>
<dbReference type="KEGG" id="csc:Csac_1593"/>
<dbReference type="eggNOG" id="COG0718">
    <property type="taxonomic scope" value="Bacteria"/>
</dbReference>
<dbReference type="HOGENOM" id="CLU_140930_1_0_9"/>
<dbReference type="OrthoDB" id="9795263at2"/>
<dbReference type="Proteomes" id="UP000000256">
    <property type="component" value="Chromosome"/>
</dbReference>
<dbReference type="GO" id="GO:0043590">
    <property type="term" value="C:bacterial nucleoid"/>
    <property type="evidence" value="ECO:0007669"/>
    <property type="project" value="UniProtKB-UniRule"/>
</dbReference>
<dbReference type="GO" id="GO:0005829">
    <property type="term" value="C:cytosol"/>
    <property type="evidence" value="ECO:0007669"/>
    <property type="project" value="TreeGrafter"/>
</dbReference>
<dbReference type="GO" id="GO:0003677">
    <property type="term" value="F:DNA binding"/>
    <property type="evidence" value="ECO:0007669"/>
    <property type="project" value="UniProtKB-UniRule"/>
</dbReference>
<dbReference type="Gene3D" id="3.30.1310.10">
    <property type="entry name" value="Nucleoid-associated protein YbaB-like domain"/>
    <property type="match status" value="1"/>
</dbReference>
<dbReference type="HAMAP" id="MF_00274">
    <property type="entry name" value="DNA_YbaB_EbfC"/>
    <property type="match status" value="1"/>
</dbReference>
<dbReference type="InterPro" id="IPR036894">
    <property type="entry name" value="YbaB-like_sf"/>
</dbReference>
<dbReference type="InterPro" id="IPR004401">
    <property type="entry name" value="YbaB/EbfC"/>
</dbReference>
<dbReference type="NCBIfam" id="TIGR00103">
    <property type="entry name" value="DNA_YbaB_EbfC"/>
    <property type="match status" value="1"/>
</dbReference>
<dbReference type="PANTHER" id="PTHR33449">
    <property type="entry name" value="NUCLEOID-ASSOCIATED PROTEIN YBAB"/>
    <property type="match status" value="1"/>
</dbReference>
<dbReference type="PANTHER" id="PTHR33449:SF1">
    <property type="entry name" value="NUCLEOID-ASSOCIATED PROTEIN YBAB"/>
    <property type="match status" value="1"/>
</dbReference>
<dbReference type="Pfam" id="PF02575">
    <property type="entry name" value="YbaB_DNA_bd"/>
    <property type="match status" value="1"/>
</dbReference>
<dbReference type="PIRSF" id="PIRSF004555">
    <property type="entry name" value="UCP004555"/>
    <property type="match status" value="1"/>
</dbReference>
<dbReference type="SUPFAM" id="SSF82607">
    <property type="entry name" value="YbaB-like"/>
    <property type="match status" value="1"/>
</dbReference>
<comment type="function">
    <text evidence="1">Binds to DNA and alters its conformation. May be involved in regulation of gene expression, nucleoid organization and DNA protection.</text>
</comment>
<comment type="subunit">
    <text evidence="1">Homodimer.</text>
</comment>
<comment type="subcellular location">
    <subcellularLocation>
        <location evidence="1">Cytoplasm</location>
        <location evidence="1">Nucleoid</location>
    </subcellularLocation>
</comment>
<comment type="similarity">
    <text evidence="1">Belongs to the YbaB/EbfC family.</text>
</comment>
<name>Y1593_CALS8</name>